<reference key="1">
    <citation type="journal article" date="2007" name="PLoS Genet.">
        <title>Patterns and implications of gene gain and loss in the evolution of Prochlorococcus.</title>
        <authorList>
            <person name="Kettler G.C."/>
            <person name="Martiny A.C."/>
            <person name="Huang K."/>
            <person name="Zucker J."/>
            <person name="Coleman M.L."/>
            <person name="Rodrigue S."/>
            <person name="Chen F."/>
            <person name="Lapidus A."/>
            <person name="Ferriera S."/>
            <person name="Johnson J."/>
            <person name="Steglich C."/>
            <person name="Church G.M."/>
            <person name="Richardson P."/>
            <person name="Chisholm S.W."/>
        </authorList>
    </citation>
    <scope>NUCLEOTIDE SEQUENCE [LARGE SCALE GENOMIC DNA]</scope>
    <source>
        <strain>NATL2A</strain>
    </source>
</reference>
<proteinExistence type="inferred from homology"/>
<keyword id="KW-0143">Chaperone</keyword>
<keyword id="KW-0963">Cytoplasm</keyword>
<keyword id="KW-0996">Nickel insertion</keyword>
<keyword id="KW-1185">Reference proteome</keyword>
<name>URED_PROMT</name>
<protein>
    <recommendedName>
        <fullName evidence="1">Urease accessory protein UreD</fullName>
    </recommendedName>
</protein>
<feature type="chain" id="PRO_0000346587" description="Urease accessory protein UreD">
    <location>
        <begin position="1"/>
        <end position="307"/>
    </location>
</feature>
<comment type="function">
    <text evidence="1">Required for maturation of urease via the functional incorporation of the urease nickel metallocenter.</text>
</comment>
<comment type="subunit">
    <text evidence="1">UreD, UreF and UreG form a complex that acts as a GTP-hydrolysis-dependent molecular chaperone, activating the urease apoprotein by helping to assemble the nickel containing metallocenter of UreC. The UreE protein probably delivers the nickel.</text>
</comment>
<comment type="subcellular location">
    <subcellularLocation>
        <location evidence="1">Cytoplasm</location>
    </subcellularLocation>
</comment>
<comment type="similarity">
    <text evidence="1">Belongs to the UreD family.</text>
</comment>
<evidence type="ECO:0000255" key="1">
    <source>
        <dbReference type="HAMAP-Rule" id="MF_01384"/>
    </source>
</evidence>
<dbReference type="EMBL" id="CP000095">
    <property type="protein sequence ID" value="AAZ58542.1"/>
    <property type="molecule type" value="Genomic_DNA"/>
</dbReference>
<dbReference type="RefSeq" id="WP_011295397.1">
    <property type="nucleotide sequence ID" value="NC_007335.2"/>
</dbReference>
<dbReference type="SMR" id="Q46IY6"/>
<dbReference type="STRING" id="59920.PMN2A_1052"/>
<dbReference type="KEGG" id="pmn:PMN2A_1052"/>
<dbReference type="HOGENOM" id="CLU_056339_4_0_3"/>
<dbReference type="OrthoDB" id="9798842at2"/>
<dbReference type="PhylomeDB" id="Q46IY6"/>
<dbReference type="Proteomes" id="UP000002535">
    <property type="component" value="Chromosome"/>
</dbReference>
<dbReference type="GO" id="GO:0005737">
    <property type="term" value="C:cytoplasm"/>
    <property type="evidence" value="ECO:0007669"/>
    <property type="project" value="UniProtKB-SubCell"/>
</dbReference>
<dbReference type="GO" id="GO:0016151">
    <property type="term" value="F:nickel cation binding"/>
    <property type="evidence" value="ECO:0007669"/>
    <property type="project" value="UniProtKB-UniRule"/>
</dbReference>
<dbReference type="HAMAP" id="MF_01384">
    <property type="entry name" value="UreD"/>
    <property type="match status" value="1"/>
</dbReference>
<dbReference type="InterPro" id="IPR002669">
    <property type="entry name" value="UreD"/>
</dbReference>
<dbReference type="PANTHER" id="PTHR33643">
    <property type="entry name" value="UREASE ACCESSORY PROTEIN D"/>
    <property type="match status" value="1"/>
</dbReference>
<dbReference type="PANTHER" id="PTHR33643:SF1">
    <property type="entry name" value="UREASE ACCESSORY PROTEIN D"/>
    <property type="match status" value="1"/>
</dbReference>
<dbReference type="Pfam" id="PF01774">
    <property type="entry name" value="UreD"/>
    <property type="match status" value="1"/>
</dbReference>
<organism>
    <name type="scientific">Prochlorococcus marinus (strain NATL2A)</name>
    <dbReference type="NCBI Taxonomy" id="59920"/>
    <lineage>
        <taxon>Bacteria</taxon>
        <taxon>Bacillati</taxon>
        <taxon>Cyanobacteriota</taxon>
        <taxon>Cyanophyceae</taxon>
        <taxon>Synechococcales</taxon>
        <taxon>Prochlorococcaceae</taxon>
        <taxon>Prochlorococcus</taxon>
    </lineage>
</organism>
<gene>
    <name evidence="1" type="primary">ureD</name>
    <name type="ordered locus">PMN2A_1052</name>
</gene>
<sequence length="307" mass="34801">MKSQWHGTCDLRLFKSSSSNNKDIVKTIHQAKSTAPLKVMRVFNDKKDGRCEIPILHSAGGIVGGDQLTINVNAEEDSIAICSSVAAQKVYGSRGRSKLNPQGSWANQKCFFQIKQNSDFEWMPQELIVYQGGLFEQNMTVNLDPSSSFLCVDLVRLGRTAAEEQLGSGVWRSSLEIFRDNNQGKHYEFSDRLELSGEALKSIHGLEQKPVFGSLTWITPKKIMQKDLSDLLVECRQQRAGLEGFMTCSLLENGISARYTGSSTQSARFWFYRIWSLTRVLRKLSMPEYMRIWPMQENPSRDIKCPL</sequence>
<accession>Q46IY6</accession>